<dbReference type="EMBL" id="AF000607">
    <property type="protein sequence ID" value="AAB53807.1"/>
    <property type="molecule type" value="mRNA"/>
</dbReference>
<dbReference type="SMR" id="O01673"/>
<dbReference type="FunFam" id="1.20.5.170:FF:000005">
    <property type="entry name" value="Tropomyosin alpha-1 chain"/>
    <property type="match status" value="1"/>
</dbReference>
<dbReference type="FunFam" id="1.20.5.170:FF:000001">
    <property type="entry name" value="Tropomyosin alpha-1 chain isoform 1"/>
    <property type="match status" value="1"/>
</dbReference>
<dbReference type="FunFam" id="1.20.5.340:FF:000001">
    <property type="entry name" value="Tropomyosin alpha-1 chain isoform 2"/>
    <property type="match status" value="1"/>
</dbReference>
<dbReference type="Gene3D" id="1.20.5.170">
    <property type="match status" value="2"/>
</dbReference>
<dbReference type="Gene3D" id="1.20.5.340">
    <property type="match status" value="1"/>
</dbReference>
<dbReference type="InterPro" id="IPR000533">
    <property type="entry name" value="Tropomyosin"/>
</dbReference>
<dbReference type="PANTHER" id="PTHR19269">
    <property type="entry name" value="TROPOMYOSIN"/>
    <property type="match status" value="1"/>
</dbReference>
<dbReference type="Pfam" id="PF00261">
    <property type="entry name" value="Tropomyosin"/>
    <property type="match status" value="1"/>
</dbReference>
<dbReference type="PRINTS" id="PR00194">
    <property type="entry name" value="TROPOMYOSIN"/>
</dbReference>
<dbReference type="SUPFAM" id="SSF57997">
    <property type="entry name" value="Tropomyosin"/>
    <property type="match status" value="1"/>
</dbReference>
<dbReference type="PROSITE" id="PS00326">
    <property type="entry name" value="TROPOMYOSIN"/>
    <property type="match status" value="1"/>
</dbReference>
<reference key="1">
    <citation type="submission" date="1997-04" db="EMBL/GenBank/DDBJ databases">
        <title>Molecular cloning and characterization of tropomyosin, a protective antigen of Acanthocheilonema viteae.</title>
        <authorList>
            <person name="Adam R."/>
            <person name="Hartmann S."/>
            <person name="von Nickisch-Rosenegk E."/>
            <person name="Lucius R."/>
        </authorList>
    </citation>
    <scope>NUCLEOTIDE SEQUENCE [MRNA]</scope>
    <source>
        <tissue>Muscle</tissue>
    </source>
</reference>
<accession>O01673</accession>
<sequence>MDAIKKKMQAMKIEKDTALDRADAAKEKVRQMTDKLERIEEELRDTQKKMMQTENDLNKAQEDLAVANTNLEDKEKKVQKAEAEVPPLNRRMTLLEEELERAEERLKIATDKLEKATHTADESDRVRKVMENRSFQDEERANTVESQLKEAQLLAEEADRKYDEVARKLAMVEADLERAEERAEAGENKIVELEEELRVVGNNLKFLEVSEEKALQREDSYEEQIRTVSARLKEAETRAEFAERSVQKLQKEVDRLEDELVHEKGRYKNISEELDQTFQELFGY</sequence>
<feature type="chain" id="PRO_0000205644" description="Tropomyosin">
    <location>
        <begin position="1"/>
        <end position="284"/>
    </location>
</feature>
<feature type="region of interest" description="Disordered" evidence="1">
    <location>
        <begin position="113"/>
        <end position="143"/>
    </location>
</feature>
<feature type="coiled-coil region">
    <location>
        <begin position="1"/>
        <end position="284"/>
    </location>
</feature>
<feature type="compositionally biased region" description="Basic and acidic residues" evidence="1">
    <location>
        <begin position="113"/>
        <end position="142"/>
    </location>
</feature>
<organism>
    <name type="scientific">Acanthocheilonema viteae</name>
    <name type="common">Filarial nematode worm</name>
    <name type="synonym">Dipetalonema viteae</name>
    <dbReference type="NCBI Taxonomy" id="6277"/>
    <lineage>
        <taxon>Eukaryota</taxon>
        <taxon>Metazoa</taxon>
        <taxon>Ecdysozoa</taxon>
        <taxon>Nematoda</taxon>
        <taxon>Chromadorea</taxon>
        <taxon>Rhabditida</taxon>
        <taxon>Spirurina</taxon>
        <taxon>Spiruromorpha</taxon>
        <taxon>Filarioidea</taxon>
        <taxon>Onchocercidae</taxon>
        <taxon>Acanthocheilonema</taxon>
    </lineage>
</organism>
<name>TPM_ACAVI</name>
<proteinExistence type="evidence at transcript level"/>
<protein>
    <recommendedName>
        <fullName>Tropomyosin</fullName>
    </recommendedName>
</protein>
<comment type="function">
    <text>Tropomyosin, in association with the troponin complex, plays a central role in the calcium dependent regulation of muscle contraction.</text>
</comment>
<comment type="domain">
    <text>The molecule is in a coiled coil structure that is formed by 2 polypeptide chains. The sequence exhibits a prominent seven-residues periodicity.</text>
</comment>
<comment type="similarity">
    <text evidence="2">Belongs to the tropomyosin family.</text>
</comment>
<keyword id="KW-0175">Coiled coil</keyword>
<keyword id="KW-0677">Repeat</keyword>
<evidence type="ECO:0000256" key="1">
    <source>
        <dbReference type="SAM" id="MobiDB-lite"/>
    </source>
</evidence>
<evidence type="ECO:0000305" key="2"/>